<reference key="1">
    <citation type="book" date="2006" name="Gram positive pathogens, 2nd edition">
        <title>The Staphylococcus aureus NCTC 8325 genome.</title>
        <editorList>
            <person name="Fischetti V."/>
            <person name="Novick R."/>
            <person name="Ferretti J."/>
            <person name="Portnoy D."/>
            <person name="Rood J."/>
        </editorList>
        <authorList>
            <person name="Gillaspy A.F."/>
            <person name="Worrell V."/>
            <person name="Orvis J."/>
            <person name="Roe B.A."/>
            <person name="Dyer D.W."/>
            <person name="Iandolo J.J."/>
        </authorList>
    </citation>
    <scope>NUCLEOTIDE SEQUENCE [LARGE SCALE GENOMIC DNA]</scope>
    <source>
        <strain>NCTC 8325 / PS 47</strain>
    </source>
</reference>
<reference key="2">
    <citation type="journal article" date="2005" name="Mol. Microbiol.">
        <title>Silkworm pathogenic bacteria infection model for identification of novel virulence genes.</title>
        <authorList>
            <person name="Kaito C."/>
            <person name="Kurokawa K."/>
            <person name="Matsumoto Y."/>
            <person name="Terao Y."/>
            <person name="Kawabata S."/>
            <person name="Hamada S."/>
            <person name="Sekimizu K."/>
        </authorList>
    </citation>
    <scope>FUNCTION</scope>
</reference>
<dbReference type="EMBL" id="CP000253">
    <property type="protein sequence ID" value="ABD30529.1"/>
    <property type="molecule type" value="Genomic_DNA"/>
</dbReference>
<dbReference type="RefSeq" id="WP_000404650.1">
    <property type="nucleotide sequence ID" value="NZ_LS483365.1"/>
</dbReference>
<dbReference type="RefSeq" id="YP_499962.1">
    <property type="nucleotide sequence ID" value="NC_007795.1"/>
</dbReference>
<dbReference type="SMR" id="Q2FYK3"/>
<dbReference type="STRING" id="93061.SAOUHSC_01437"/>
<dbReference type="PaxDb" id="1280-SAXN108_1450"/>
<dbReference type="GeneID" id="3920218"/>
<dbReference type="KEGG" id="sao:SAOUHSC_01437"/>
<dbReference type="PATRIC" id="fig|93061.5.peg.1313"/>
<dbReference type="eggNOG" id="COG1413">
    <property type="taxonomic scope" value="Bacteria"/>
</dbReference>
<dbReference type="HOGENOM" id="CLU_733295_0_0_9"/>
<dbReference type="OrthoDB" id="420201at2"/>
<dbReference type="PRO" id="PR:Q2FYK3"/>
<dbReference type="Proteomes" id="UP000008816">
    <property type="component" value="Chromosome"/>
</dbReference>
<dbReference type="GO" id="GO:0016491">
    <property type="term" value="F:oxidoreductase activity"/>
    <property type="evidence" value="ECO:0000318"/>
    <property type="project" value="GO_Central"/>
</dbReference>
<dbReference type="Gene3D" id="1.25.10.10">
    <property type="entry name" value="Leucine-rich Repeat Variant"/>
    <property type="match status" value="1"/>
</dbReference>
<dbReference type="Gene3D" id="3.30.1370.70">
    <property type="entry name" value="Scaffold protein Nfu/NifU, N-terminal domain"/>
    <property type="match status" value="1"/>
</dbReference>
<dbReference type="InterPro" id="IPR011989">
    <property type="entry name" value="ARM-like"/>
</dbReference>
<dbReference type="InterPro" id="IPR016024">
    <property type="entry name" value="ARM-type_fold"/>
</dbReference>
<dbReference type="InterPro" id="IPR014824">
    <property type="entry name" value="Nfu/NifU_N"/>
</dbReference>
<dbReference type="InterPro" id="IPR036498">
    <property type="entry name" value="Nfu/NifU_N_sf"/>
</dbReference>
<dbReference type="InterPro" id="IPR004155">
    <property type="entry name" value="PBS_lyase_HEAT"/>
</dbReference>
<dbReference type="InterPro" id="IPR025989">
    <property type="entry name" value="Virulence_F_dom"/>
</dbReference>
<dbReference type="PANTHER" id="PTHR12697:SF37">
    <property type="entry name" value="CONSERVED VIRULENCE FACTOR C"/>
    <property type="match status" value="1"/>
</dbReference>
<dbReference type="PANTHER" id="PTHR12697">
    <property type="entry name" value="PBS LYASE HEAT-LIKE PROTEIN"/>
    <property type="match status" value="1"/>
</dbReference>
<dbReference type="Pfam" id="PF13646">
    <property type="entry name" value="HEAT_2"/>
    <property type="match status" value="1"/>
</dbReference>
<dbReference type="Pfam" id="PF08712">
    <property type="entry name" value="Nfu_N"/>
    <property type="match status" value="1"/>
</dbReference>
<dbReference type="Pfam" id="PF13769">
    <property type="entry name" value="Virulence_fact"/>
    <property type="match status" value="1"/>
</dbReference>
<dbReference type="SMART" id="SM00567">
    <property type="entry name" value="EZ_HEAT"/>
    <property type="match status" value="3"/>
</dbReference>
<dbReference type="SMART" id="SM00932">
    <property type="entry name" value="Nfu_N"/>
    <property type="match status" value="1"/>
</dbReference>
<dbReference type="SUPFAM" id="SSF48371">
    <property type="entry name" value="ARM repeat"/>
    <property type="match status" value="1"/>
</dbReference>
<dbReference type="SUPFAM" id="SSF110836">
    <property type="entry name" value="Hypothetical protein SAV1430"/>
    <property type="match status" value="1"/>
</dbReference>
<sequence length="374" mass="42923">MEILRIEPTPSPNTMKVVLSYTREDKLSNTYKKVEETQPRFINQLLSIDGITSIFHVMNFLAVDKAPKADWEVILPDIKAAFSDANKVLESVNEPQIDNHFGEIKAELLTFKGIPYQIKLTSADQELREQLPQTYVDHMTQAQTAHDNIVFMRKWLDLGNRYGNIQEVMDGVLEEVLATYPESQLPVLVKHALEENHATNNYHFYRHVSLDEYHATDNWKTRLRMLNHFPKPTFEDIPLLDLALSDEKVPVRRQAIVLLGMIESKEILPYLYKGLRDKSPAVRRTAGDCISDLGYPEALPEMVLLLDDPQKIVRWRAAMFIFDEGNAEQLPALKAHINDNAFEVKLQIEMAISRIENGDEALGSVWKQMANRTI</sequence>
<gene>
    <name type="primary">cvfC</name>
    <name type="ordered locus">SAOUHSC_01437</name>
</gene>
<keyword id="KW-1185">Reference proteome</keyword>
<keyword id="KW-0843">Virulence</keyword>
<organism>
    <name type="scientific">Staphylococcus aureus (strain NCTC 8325 / PS 47)</name>
    <dbReference type="NCBI Taxonomy" id="93061"/>
    <lineage>
        <taxon>Bacteria</taxon>
        <taxon>Bacillati</taxon>
        <taxon>Bacillota</taxon>
        <taxon>Bacilli</taxon>
        <taxon>Bacillales</taxon>
        <taxon>Staphylococcaceae</taxon>
        <taxon>Staphylococcus</taxon>
    </lineage>
</organism>
<comment type="function">
    <text evidence="1">Required for hemolysin production. Contributes to virulence in both silkworm-infection model and mice.</text>
</comment>
<comment type="similarity">
    <text evidence="2">Belongs to the CvfC family.</text>
</comment>
<name>CVFC_STAA8</name>
<feature type="chain" id="PRO_0000282309" description="Conserved virulence factor C">
    <location>
        <begin position="1"/>
        <end position="374"/>
    </location>
</feature>
<protein>
    <recommendedName>
        <fullName>Conserved virulence factor C</fullName>
    </recommendedName>
</protein>
<proteinExistence type="inferred from homology"/>
<evidence type="ECO:0000269" key="1">
    <source>
    </source>
</evidence>
<evidence type="ECO:0000305" key="2"/>
<accession>Q2FYK3</accession>